<name>PZRN4_HUMAN</name>
<organism>
    <name type="scientific">Homo sapiens</name>
    <name type="common">Human</name>
    <dbReference type="NCBI Taxonomy" id="9606"/>
    <lineage>
        <taxon>Eukaryota</taxon>
        <taxon>Metazoa</taxon>
        <taxon>Chordata</taxon>
        <taxon>Craniata</taxon>
        <taxon>Vertebrata</taxon>
        <taxon>Euteleostomi</taxon>
        <taxon>Mammalia</taxon>
        <taxon>Eutheria</taxon>
        <taxon>Euarchontoglires</taxon>
        <taxon>Primates</taxon>
        <taxon>Haplorrhini</taxon>
        <taxon>Catarrhini</taxon>
        <taxon>Hominidae</taxon>
        <taxon>Homo</taxon>
    </lineage>
</organism>
<dbReference type="EMBL" id="AC090531">
    <property type="status" value="NOT_ANNOTATED_CDS"/>
    <property type="molecule type" value="Genomic_DNA"/>
</dbReference>
<dbReference type="EMBL" id="AC021651">
    <property type="status" value="NOT_ANNOTATED_CDS"/>
    <property type="molecule type" value="Genomic_DNA"/>
</dbReference>
<dbReference type="EMBL" id="AK131554">
    <property type="protein sequence ID" value="BAD18688.1"/>
    <property type="molecule type" value="mRNA"/>
</dbReference>
<dbReference type="EMBL" id="BC040922">
    <property type="protein sequence ID" value="AAH40922.1"/>
    <property type="molecule type" value="mRNA"/>
</dbReference>
<dbReference type="EMBL" id="BC093744">
    <property type="protein sequence ID" value="AAH93744.1"/>
    <property type="molecule type" value="mRNA"/>
</dbReference>
<dbReference type="EMBL" id="BC093746">
    <property type="protein sequence ID" value="AAH93746.2"/>
    <property type="molecule type" value="mRNA"/>
</dbReference>
<dbReference type="EMBL" id="BX640695">
    <property type="protein sequence ID" value="CAE45818.2"/>
    <property type="molecule type" value="mRNA"/>
</dbReference>
<dbReference type="EMBL" id="AL133067">
    <property type="protein sequence ID" value="CAB61390.3"/>
    <property type="molecule type" value="mRNA"/>
</dbReference>
<dbReference type="CCDS" id="CCDS53777.1">
    <molecule id="Q6ZMN7-1"/>
</dbReference>
<dbReference type="CCDS" id="CCDS8739.1">
    <molecule id="Q6ZMN7-2"/>
</dbReference>
<dbReference type="PIR" id="T42667">
    <property type="entry name" value="T42667"/>
</dbReference>
<dbReference type="RefSeq" id="NP_001158067.1">
    <molecule id="Q6ZMN7-1"/>
    <property type="nucleotide sequence ID" value="NM_001164595.2"/>
</dbReference>
<dbReference type="RefSeq" id="NP_037509.3">
    <molecule id="Q6ZMN7-2"/>
    <property type="nucleotide sequence ID" value="NM_013377.3"/>
</dbReference>
<dbReference type="BioGRID" id="118988">
    <property type="interactions" value="6"/>
</dbReference>
<dbReference type="FunCoup" id="Q6ZMN7">
    <property type="interactions" value="150"/>
</dbReference>
<dbReference type="IntAct" id="Q6ZMN7">
    <property type="interactions" value="2"/>
</dbReference>
<dbReference type="STRING" id="9606.ENSP00000384197"/>
<dbReference type="GlyGen" id="Q6ZMN7">
    <property type="glycosylation" value="1 site"/>
</dbReference>
<dbReference type="iPTMnet" id="Q6ZMN7"/>
<dbReference type="PhosphoSitePlus" id="Q6ZMN7"/>
<dbReference type="BioMuta" id="PDZRN4"/>
<dbReference type="DMDM" id="116242741"/>
<dbReference type="jPOST" id="Q6ZMN7"/>
<dbReference type="MassIVE" id="Q6ZMN7"/>
<dbReference type="PaxDb" id="9606-ENSP00000384197"/>
<dbReference type="PeptideAtlas" id="Q6ZMN7"/>
<dbReference type="ProteomicsDB" id="67892">
    <molecule id="Q6ZMN7-1"/>
</dbReference>
<dbReference type="ProteomicsDB" id="67893">
    <molecule id="Q6ZMN7-2"/>
</dbReference>
<dbReference type="ProteomicsDB" id="67894">
    <molecule id="Q6ZMN7-4"/>
</dbReference>
<dbReference type="Antibodypedia" id="25032">
    <property type="antibodies" value="49 antibodies from 16 providers"/>
</dbReference>
<dbReference type="DNASU" id="29951"/>
<dbReference type="Ensembl" id="ENST00000298919.7">
    <molecule id="Q6ZMN7-4"/>
    <property type="protein sequence ID" value="ENSP00000298919.7"/>
    <property type="gene ID" value="ENSG00000165966.16"/>
</dbReference>
<dbReference type="Ensembl" id="ENST00000402685.7">
    <molecule id="Q6ZMN7-1"/>
    <property type="protein sequence ID" value="ENSP00000384197.2"/>
    <property type="gene ID" value="ENSG00000165966.16"/>
</dbReference>
<dbReference type="Ensembl" id="ENST00000539469.6">
    <molecule id="Q6ZMN7-2"/>
    <property type="protein sequence ID" value="ENSP00000439990.2"/>
    <property type="gene ID" value="ENSG00000165966.16"/>
</dbReference>
<dbReference type="GeneID" id="29951"/>
<dbReference type="KEGG" id="hsa:29951"/>
<dbReference type="MANE-Select" id="ENST00000402685.7">
    <property type="protein sequence ID" value="ENSP00000384197.2"/>
    <property type="RefSeq nucleotide sequence ID" value="NM_001164595.2"/>
    <property type="RefSeq protein sequence ID" value="NP_001158067.1"/>
</dbReference>
<dbReference type="UCSC" id="uc001rmq.5">
    <molecule id="Q6ZMN7-1"/>
    <property type="organism name" value="human"/>
</dbReference>
<dbReference type="AGR" id="HGNC:30552"/>
<dbReference type="CTD" id="29951"/>
<dbReference type="DisGeNET" id="29951"/>
<dbReference type="GeneCards" id="PDZRN4"/>
<dbReference type="HGNC" id="HGNC:30552">
    <property type="gene designation" value="PDZRN4"/>
</dbReference>
<dbReference type="HPA" id="ENSG00000165966">
    <property type="expression patterns" value="Tissue enhanced (intestine, seminal vesicle)"/>
</dbReference>
<dbReference type="MIM" id="609730">
    <property type="type" value="gene"/>
</dbReference>
<dbReference type="neXtProt" id="NX_Q6ZMN7"/>
<dbReference type="OpenTargets" id="ENSG00000165966"/>
<dbReference type="PharmGKB" id="PA134974780"/>
<dbReference type="VEuPathDB" id="HostDB:ENSG00000165966"/>
<dbReference type="eggNOG" id="KOG0297">
    <property type="taxonomic scope" value="Eukaryota"/>
</dbReference>
<dbReference type="eggNOG" id="KOG0312">
    <property type="taxonomic scope" value="Eukaryota"/>
</dbReference>
<dbReference type="GeneTree" id="ENSGT00950000183062"/>
<dbReference type="HOGENOM" id="CLU_011096_0_0_1"/>
<dbReference type="InParanoid" id="Q6ZMN7"/>
<dbReference type="OMA" id="TMEQDYY"/>
<dbReference type="OrthoDB" id="6270329at2759"/>
<dbReference type="PAN-GO" id="Q6ZMN7">
    <property type="GO annotations" value="0 GO annotations based on evolutionary models"/>
</dbReference>
<dbReference type="PhylomeDB" id="Q6ZMN7"/>
<dbReference type="TreeFam" id="TF315909"/>
<dbReference type="PathwayCommons" id="Q6ZMN7"/>
<dbReference type="SignaLink" id="Q6ZMN7"/>
<dbReference type="SIGNOR" id="Q6ZMN7"/>
<dbReference type="BioGRID-ORCS" id="29951">
    <property type="hits" value="5 hits in 1189 CRISPR screens"/>
</dbReference>
<dbReference type="ChiTaRS" id="PDZRN4">
    <property type="organism name" value="human"/>
</dbReference>
<dbReference type="GenomeRNAi" id="29951"/>
<dbReference type="Pharos" id="Q6ZMN7">
    <property type="development level" value="Tdark"/>
</dbReference>
<dbReference type="PRO" id="PR:Q6ZMN7"/>
<dbReference type="Proteomes" id="UP000005640">
    <property type="component" value="Chromosome 12"/>
</dbReference>
<dbReference type="RNAct" id="Q6ZMN7">
    <property type="molecule type" value="protein"/>
</dbReference>
<dbReference type="Bgee" id="ENSG00000165966">
    <property type="expression patterns" value="Expressed in cauda epididymis and 147 other cell types or tissues"/>
</dbReference>
<dbReference type="ExpressionAtlas" id="Q6ZMN7">
    <property type="expression patterns" value="baseline and differential"/>
</dbReference>
<dbReference type="GO" id="GO:0008270">
    <property type="term" value="F:zinc ion binding"/>
    <property type="evidence" value="ECO:0007669"/>
    <property type="project" value="UniProtKB-KW"/>
</dbReference>
<dbReference type="CDD" id="cd06715">
    <property type="entry name" value="PDZ1-PDZRN4-like"/>
    <property type="match status" value="1"/>
</dbReference>
<dbReference type="CDD" id="cd06716">
    <property type="entry name" value="PDZ2-PDZRN4-like"/>
    <property type="match status" value="1"/>
</dbReference>
<dbReference type="CDD" id="cd16719">
    <property type="entry name" value="RING-HC_LNX4"/>
    <property type="match status" value="1"/>
</dbReference>
<dbReference type="FunFam" id="3.30.40.10:FF:000214">
    <property type="entry name" value="E3 ubiquitin-protein ligase PDZRN3 isoform X1"/>
    <property type="match status" value="1"/>
</dbReference>
<dbReference type="FunFam" id="2.30.42.10:FF:000028">
    <property type="entry name" value="PDZ domain containing ring finger 4"/>
    <property type="match status" value="1"/>
</dbReference>
<dbReference type="FunFam" id="2.30.42.10:FF:000133">
    <property type="entry name" value="PDZ domain containing ring finger 4"/>
    <property type="match status" value="1"/>
</dbReference>
<dbReference type="Gene3D" id="2.30.42.10">
    <property type="match status" value="2"/>
</dbReference>
<dbReference type="Gene3D" id="3.30.40.10">
    <property type="entry name" value="Zinc/RING finger domain, C3HC4 (zinc finger)"/>
    <property type="match status" value="1"/>
</dbReference>
<dbReference type="InterPro" id="IPR051971">
    <property type="entry name" value="E3_ubiquitin-PDZ_ligase"/>
</dbReference>
<dbReference type="InterPro" id="IPR001478">
    <property type="entry name" value="PDZ"/>
</dbReference>
<dbReference type="InterPro" id="IPR036034">
    <property type="entry name" value="PDZ_sf"/>
</dbReference>
<dbReference type="InterPro" id="IPR001841">
    <property type="entry name" value="Znf_RING"/>
</dbReference>
<dbReference type="InterPro" id="IPR013083">
    <property type="entry name" value="Znf_RING/FYVE/PHD"/>
</dbReference>
<dbReference type="InterPro" id="IPR017907">
    <property type="entry name" value="Znf_RING_CS"/>
</dbReference>
<dbReference type="PANTHER" id="PTHR15545">
    <property type="entry name" value="PDZ DOMAIN CONTAINING RING FINGER PROTEIN 3, 4"/>
    <property type="match status" value="1"/>
</dbReference>
<dbReference type="PANTHER" id="PTHR15545:SF6">
    <property type="entry name" value="PDZ DOMAIN-CONTAINING RING FINGER PROTEIN 4"/>
    <property type="match status" value="1"/>
</dbReference>
<dbReference type="Pfam" id="PF00595">
    <property type="entry name" value="PDZ"/>
    <property type="match status" value="2"/>
</dbReference>
<dbReference type="Pfam" id="PF13923">
    <property type="entry name" value="zf-C3HC4_2"/>
    <property type="match status" value="1"/>
</dbReference>
<dbReference type="SMART" id="SM00228">
    <property type="entry name" value="PDZ"/>
    <property type="match status" value="2"/>
</dbReference>
<dbReference type="SMART" id="SM00184">
    <property type="entry name" value="RING"/>
    <property type="match status" value="1"/>
</dbReference>
<dbReference type="SUPFAM" id="SSF50156">
    <property type="entry name" value="PDZ domain-like"/>
    <property type="match status" value="2"/>
</dbReference>
<dbReference type="SUPFAM" id="SSF57850">
    <property type="entry name" value="RING/U-box"/>
    <property type="match status" value="1"/>
</dbReference>
<dbReference type="SUPFAM" id="SSF49599">
    <property type="entry name" value="TRAF domain-like"/>
    <property type="match status" value="1"/>
</dbReference>
<dbReference type="PROSITE" id="PS50106">
    <property type="entry name" value="PDZ"/>
    <property type="match status" value="2"/>
</dbReference>
<dbReference type="PROSITE" id="PS00518">
    <property type="entry name" value="ZF_RING_1"/>
    <property type="match status" value="1"/>
</dbReference>
<dbReference type="PROSITE" id="PS50089">
    <property type="entry name" value="ZF_RING_2"/>
    <property type="match status" value="1"/>
</dbReference>
<keyword id="KW-0025">Alternative splicing</keyword>
<keyword id="KW-0175">Coiled coil</keyword>
<keyword id="KW-0479">Metal-binding</keyword>
<keyword id="KW-1267">Proteomics identification</keyword>
<keyword id="KW-1185">Reference proteome</keyword>
<keyword id="KW-0677">Repeat</keyword>
<keyword id="KW-0862">Zinc</keyword>
<keyword id="KW-0863">Zinc-finger</keyword>
<proteinExistence type="evidence at protein level"/>
<protein>
    <recommendedName>
        <fullName>PDZ domain-containing RING finger protein 4</fullName>
    </recommendedName>
    <alternativeName>
        <fullName>Ligand of Numb protein X 4</fullName>
    </alternativeName>
    <alternativeName>
        <fullName>SEMACAP3-like protein</fullName>
    </alternativeName>
</protein>
<sequence>MGFALERFAEAVDPALECKLCGQVLEEPLCTPCGHVFCASCLLPWAVRRRRCPLQCQPLAPGELYRVLPLRSLIQKLRVQCDYRARGCGHSVRLHELEAHVEHCDFGPARRLRSRGGCASGLGGGEVPARGGCGPTPRAGRGGGARGGPPGGRWGRGRGPGPRVLAWRRREKALLAQLWALQGEVQLTARRYQEKFTQYMAHVRNFVGDLGGGHRRDGEHKPFTIVLERENDTLGFNIIGGRPNQNNQEGTSTEGIYVSKILENGPADRADGLEIHDKIMEVNGKDLSKATHEEAVEAFRNAKEPIVVQVLRRTPLSRPAYGMASEVQLMNASTQTDITFEHIMALAKLRPPTPPVPDICPFLLSDSCHSLHPMEHEFYEDNEYISSLPADADRTEDFEYEEVELCRVSSQEKLGLTVCYRTDDEEDTGIYVSEVDPNSIAAKDGRIREGDRILQINGEDVQNREEAVALLSNDECKRIVLLVARPEIQLDEGWLEDERNEFLEELNLEMLEEEHNEAMQPTANEVEQPKKQEEEEGTTDTATSSSNNHEKDSGVGRTDESLRNDESSEQENAAEDPNSTSLKSKRDLGQSQDTLGSVELQYNESLVSGEYIDSDCIGNPDEDCERFRQLLELKCKIRNHGEYDLYYSSSTIECNQGEQEGVEHELQLLNEELRNIELECQNIMQAHRLQKVTDQYGDIWTLHDGGFRNYNTSIDMQRGKLDDIMEHPEKSDKDSSSAYNTAESCRSTPLTVDRSPDSSLPRVINLTNKKNLRSTMAATQSSSGQSSKESTSTKAKTTEQGCSAESKEKVLEGSKLPDQEKAVSEHIPYLSPYHSSSYRYANIPAHARHYQSYMQLIQQKSAVEYAQSQLSLVSMCKESQKCSEPKMEWKVKIRSDGTRYITKRPVRDRILKERALKIKEERSGMTTDDDTMSEMKMGRYWSKEERKQHLVRAKEQRRRREFMMRSRLECLKESPQSGSEGKKEINIIELSHKKMMKKRNKKILDNWMTIQELMTHGAKSPDGTRVHNAFLSVTTV</sequence>
<reference key="1">
    <citation type="journal article" date="2006" name="Nature">
        <title>The finished DNA sequence of human chromosome 12.</title>
        <authorList>
            <person name="Scherer S.E."/>
            <person name="Muzny D.M."/>
            <person name="Buhay C.J."/>
            <person name="Chen R."/>
            <person name="Cree A."/>
            <person name="Ding Y."/>
            <person name="Dugan-Rocha S."/>
            <person name="Gill R."/>
            <person name="Gunaratne P."/>
            <person name="Harris R.A."/>
            <person name="Hawes A.C."/>
            <person name="Hernandez J."/>
            <person name="Hodgson A.V."/>
            <person name="Hume J."/>
            <person name="Jackson A."/>
            <person name="Khan Z.M."/>
            <person name="Kovar-Smith C."/>
            <person name="Lewis L.R."/>
            <person name="Lozado R.J."/>
            <person name="Metzker M.L."/>
            <person name="Milosavljevic A."/>
            <person name="Miner G.R."/>
            <person name="Montgomery K.T."/>
            <person name="Morgan M.B."/>
            <person name="Nazareth L.V."/>
            <person name="Scott G."/>
            <person name="Sodergren E."/>
            <person name="Song X.-Z."/>
            <person name="Steffen D."/>
            <person name="Lovering R.C."/>
            <person name="Wheeler D.A."/>
            <person name="Worley K.C."/>
            <person name="Yuan Y."/>
            <person name="Zhang Z."/>
            <person name="Adams C.Q."/>
            <person name="Ansari-Lari M.A."/>
            <person name="Ayele M."/>
            <person name="Brown M.J."/>
            <person name="Chen G."/>
            <person name="Chen Z."/>
            <person name="Clerc-Blankenburg K.P."/>
            <person name="Davis C."/>
            <person name="Delgado O."/>
            <person name="Dinh H.H."/>
            <person name="Draper H."/>
            <person name="Gonzalez-Garay M.L."/>
            <person name="Havlak P."/>
            <person name="Jackson L.R."/>
            <person name="Jacob L.S."/>
            <person name="Kelly S.H."/>
            <person name="Li L."/>
            <person name="Li Z."/>
            <person name="Liu J."/>
            <person name="Liu W."/>
            <person name="Lu J."/>
            <person name="Maheshwari M."/>
            <person name="Nguyen B.-V."/>
            <person name="Okwuonu G.O."/>
            <person name="Pasternak S."/>
            <person name="Perez L.M."/>
            <person name="Plopper F.J.H."/>
            <person name="Santibanez J."/>
            <person name="Shen H."/>
            <person name="Tabor P.E."/>
            <person name="Verduzco D."/>
            <person name="Waldron L."/>
            <person name="Wang Q."/>
            <person name="Williams G.A."/>
            <person name="Zhang J."/>
            <person name="Zhou J."/>
            <person name="Allen C.C."/>
            <person name="Amin A.G."/>
            <person name="Anyalebechi V."/>
            <person name="Bailey M."/>
            <person name="Barbaria J.A."/>
            <person name="Bimage K.E."/>
            <person name="Bryant N.P."/>
            <person name="Burch P.E."/>
            <person name="Burkett C.E."/>
            <person name="Burrell K.L."/>
            <person name="Calderon E."/>
            <person name="Cardenas V."/>
            <person name="Carter K."/>
            <person name="Casias K."/>
            <person name="Cavazos I."/>
            <person name="Cavazos S.R."/>
            <person name="Ceasar H."/>
            <person name="Chacko J."/>
            <person name="Chan S.N."/>
            <person name="Chavez D."/>
            <person name="Christopoulos C."/>
            <person name="Chu J."/>
            <person name="Cockrell R."/>
            <person name="Cox C.D."/>
            <person name="Dang M."/>
            <person name="Dathorne S.R."/>
            <person name="David R."/>
            <person name="Davis C.M."/>
            <person name="Davy-Carroll L."/>
            <person name="Deshazo D.R."/>
            <person name="Donlin J.E."/>
            <person name="D'Souza L."/>
            <person name="Eaves K.A."/>
            <person name="Egan A."/>
            <person name="Emery-Cohen A.J."/>
            <person name="Escotto M."/>
            <person name="Flagg N."/>
            <person name="Forbes L.D."/>
            <person name="Gabisi A.M."/>
            <person name="Garza M."/>
            <person name="Hamilton C."/>
            <person name="Henderson N."/>
            <person name="Hernandez O."/>
            <person name="Hines S."/>
            <person name="Hogues M.E."/>
            <person name="Huang M."/>
            <person name="Idlebird D.G."/>
            <person name="Johnson R."/>
            <person name="Jolivet A."/>
            <person name="Jones S."/>
            <person name="Kagan R."/>
            <person name="King L.M."/>
            <person name="Leal B."/>
            <person name="Lebow H."/>
            <person name="Lee S."/>
            <person name="LeVan J.M."/>
            <person name="Lewis L.C."/>
            <person name="London P."/>
            <person name="Lorensuhewa L.M."/>
            <person name="Loulseged H."/>
            <person name="Lovett D.A."/>
            <person name="Lucier A."/>
            <person name="Lucier R.L."/>
            <person name="Ma J."/>
            <person name="Madu R.C."/>
            <person name="Mapua P."/>
            <person name="Martindale A.D."/>
            <person name="Martinez E."/>
            <person name="Massey E."/>
            <person name="Mawhiney S."/>
            <person name="Meador M.G."/>
            <person name="Mendez S."/>
            <person name="Mercado C."/>
            <person name="Mercado I.C."/>
            <person name="Merritt C.E."/>
            <person name="Miner Z.L."/>
            <person name="Minja E."/>
            <person name="Mitchell T."/>
            <person name="Mohabbat F."/>
            <person name="Mohabbat K."/>
            <person name="Montgomery B."/>
            <person name="Moore N."/>
            <person name="Morris S."/>
            <person name="Munidasa M."/>
            <person name="Ngo R.N."/>
            <person name="Nguyen N.B."/>
            <person name="Nickerson E."/>
            <person name="Nwaokelemeh O.O."/>
            <person name="Nwokenkwo S."/>
            <person name="Obregon M."/>
            <person name="Oguh M."/>
            <person name="Oragunye N."/>
            <person name="Oviedo R.J."/>
            <person name="Parish B.J."/>
            <person name="Parker D.N."/>
            <person name="Parrish J."/>
            <person name="Parks K.L."/>
            <person name="Paul H.A."/>
            <person name="Payton B.A."/>
            <person name="Perez A."/>
            <person name="Perrin W."/>
            <person name="Pickens A."/>
            <person name="Primus E.L."/>
            <person name="Pu L.-L."/>
            <person name="Puazo M."/>
            <person name="Quiles M.M."/>
            <person name="Quiroz J.B."/>
            <person name="Rabata D."/>
            <person name="Reeves K."/>
            <person name="Ruiz S.J."/>
            <person name="Shao H."/>
            <person name="Sisson I."/>
            <person name="Sonaike T."/>
            <person name="Sorelle R.P."/>
            <person name="Sutton A.E."/>
            <person name="Svatek A.F."/>
            <person name="Svetz L.A."/>
            <person name="Tamerisa K.S."/>
            <person name="Taylor T.R."/>
            <person name="Teague B."/>
            <person name="Thomas N."/>
            <person name="Thorn R.D."/>
            <person name="Trejos Z.Y."/>
            <person name="Trevino B.K."/>
            <person name="Ukegbu O.N."/>
            <person name="Urban J.B."/>
            <person name="Vasquez L.I."/>
            <person name="Vera V.A."/>
            <person name="Villasana D.M."/>
            <person name="Wang L."/>
            <person name="Ward-Moore S."/>
            <person name="Warren J.T."/>
            <person name="Wei X."/>
            <person name="White F."/>
            <person name="Williamson A.L."/>
            <person name="Wleczyk R."/>
            <person name="Wooden H.S."/>
            <person name="Wooden S.H."/>
            <person name="Yen J."/>
            <person name="Yoon L."/>
            <person name="Yoon V."/>
            <person name="Zorrilla S.E."/>
            <person name="Nelson D."/>
            <person name="Kucherlapati R."/>
            <person name="Weinstock G."/>
            <person name="Gibbs R.A."/>
        </authorList>
    </citation>
    <scope>NUCLEOTIDE SEQUENCE [LARGE SCALE GENOMIC DNA]</scope>
</reference>
<reference key="2">
    <citation type="journal article" date="2004" name="Nat. Genet.">
        <title>Complete sequencing and characterization of 21,243 full-length human cDNAs.</title>
        <authorList>
            <person name="Ota T."/>
            <person name="Suzuki Y."/>
            <person name="Nishikawa T."/>
            <person name="Otsuki T."/>
            <person name="Sugiyama T."/>
            <person name="Irie R."/>
            <person name="Wakamatsu A."/>
            <person name="Hayashi K."/>
            <person name="Sato H."/>
            <person name="Nagai K."/>
            <person name="Kimura K."/>
            <person name="Makita H."/>
            <person name="Sekine M."/>
            <person name="Obayashi M."/>
            <person name="Nishi T."/>
            <person name="Shibahara T."/>
            <person name="Tanaka T."/>
            <person name="Ishii S."/>
            <person name="Yamamoto J."/>
            <person name="Saito K."/>
            <person name="Kawai Y."/>
            <person name="Isono Y."/>
            <person name="Nakamura Y."/>
            <person name="Nagahari K."/>
            <person name="Murakami K."/>
            <person name="Yasuda T."/>
            <person name="Iwayanagi T."/>
            <person name="Wagatsuma M."/>
            <person name="Shiratori A."/>
            <person name="Sudo H."/>
            <person name="Hosoiri T."/>
            <person name="Kaku Y."/>
            <person name="Kodaira H."/>
            <person name="Kondo H."/>
            <person name="Sugawara M."/>
            <person name="Takahashi M."/>
            <person name="Kanda K."/>
            <person name="Yokoi T."/>
            <person name="Furuya T."/>
            <person name="Kikkawa E."/>
            <person name="Omura Y."/>
            <person name="Abe K."/>
            <person name="Kamihara K."/>
            <person name="Katsuta N."/>
            <person name="Sato K."/>
            <person name="Tanikawa M."/>
            <person name="Yamazaki M."/>
            <person name="Ninomiya K."/>
            <person name="Ishibashi T."/>
            <person name="Yamashita H."/>
            <person name="Murakawa K."/>
            <person name="Fujimori K."/>
            <person name="Tanai H."/>
            <person name="Kimata M."/>
            <person name="Watanabe M."/>
            <person name="Hiraoka S."/>
            <person name="Chiba Y."/>
            <person name="Ishida S."/>
            <person name="Ono Y."/>
            <person name="Takiguchi S."/>
            <person name="Watanabe S."/>
            <person name="Yosida M."/>
            <person name="Hotuta T."/>
            <person name="Kusano J."/>
            <person name="Kanehori K."/>
            <person name="Takahashi-Fujii A."/>
            <person name="Hara H."/>
            <person name="Tanase T.-O."/>
            <person name="Nomura Y."/>
            <person name="Togiya S."/>
            <person name="Komai F."/>
            <person name="Hara R."/>
            <person name="Takeuchi K."/>
            <person name="Arita M."/>
            <person name="Imose N."/>
            <person name="Musashino K."/>
            <person name="Yuuki H."/>
            <person name="Oshima A."/>
            <person name="Sasaki N."/>
            <person name="Aotsuka S."/>
            <person name="Yoshikawa Y."/>
            <person name="Matsunawa H."/>
            <person name="Ichihara T."/>
            <person name="Shiohata N."/>
            <person name="Sano S."/>
            <person name="Moriya S."/>
            <person name="Momiyama H."/>
            <person name="Satoh N."/>
            <person name="Takami S."/>
            <person name="Terashima Y."/>
            <person name="Suzuki O."/>
            <person name="Nakagawa S."/>
            <person name="Senoh A."/>
            <person name="Mizoguchi H."/>
            <person name="Goto Y."/>
            <person name="Shimizu F."/>
            <person name="Wakebe H."/>
            <person name="Hishigaki H."/>
            <person name="Watanabe T."/>
            <person name="Sugiyama A."/>
            <person name="Takemoto M."/>
            <person name="Kawakami B."/>
            <person name="Yamazaki M."/>
            <person name="Watanabe K."/>
            <person name="Kumagai A."/>
            <person name="Itakura S."/>
            <person name="Fukuzumi Y."/>
            <person name="Fujimori Y."/>
            <person name="Komiyama M."/>
            <person name="Tashiro H."/>
            <person name="Tanigami A."/>
            <person name="Fujiwara T."/>
            <person name="Ono T."/>
            <person name="Yamada K."/>
            <person name="Fujii Y."/>
            <person name="Ozaki K."/>
            <person name="Hirao M."/>
            <person name="Ohmori Y."/>
            <person name="Kawabata A."/>
            <person name="Hikiji T."/>
            <person name="Kobatake N."/>
            <person name="Inagaki H."/>
            <person name="Ikema Y."/>
            <person name="Okamoto S."/>
            <person name="Okitani R."/>
            <person name="Kawakami T."/>
            <person name="Noguchi S."/>
            <person name="Itoh T."/>
            <person name="Shigeta K."/>
            <person name="Senba T."/>
            <person name="Matsumura K."/>
            <person name="Nakajima Y."/>
            <person name="Mizuno T."/>
            <person name="Morinaga M."/>
            <person name="Sasaki M."/>
            <person name="Togashi T."/>
            <person name="Oyama M."/>
            <person name="Hata H."/>
            <person name="Watanabe M."/>
            <person name="Komatsu T."/>
            <person name="Mizushima-Sugano J."/>
            <person name="Satoh T."/>
            <person name="Shirai Y."/>
            <person name="Takahashi Y."/>
            <person name="Nakagawa K."/>
            <person name="Okumura K."/>
            <person name="Nagase T."/>
            <person name="Nomura N."/>
            <person name="Kikuchi H."/>
            <person name="Masuho Y."/>
            <person name="Yamashita R."/>
            <person name="Nakai K."/>
            <person name="Yada T."/>
            <person name="Nakamura Y."/>
            <person name="Ohara O."/>
            <person name="Isogai T."/>
            <person name="Sugano S."/>
        </authorList>
    </citation>
    <scope>NUCLEOTIDE SEQUENCE [LARGE SCALE MRNA] (ISOFORM 4)</scope>
    <source>
        <tissue>Mammary gland</tissue>
    </source>
</reference>
<reference key="3">
    <citation type="journal article" date="2004" name="Genome Res.">
        <title>The status, quality, and expansion of the NIH full-length cDNA project: the Mammalian Gene Collection (MGC).</title>
        <authorList>
            <consortium name="The MGC Project Team"/>
        </authorList>
    </citation>
    <scope>NUCLEOTIDE SEQUENCE [LARGE SCALE MRNA] (ISOFORM 2)</scope>
    <scope>NUCLEOTIDE SEQUENCE [LARGE SCALE MRNA] OF 450-1036 (ISOFORM 1)</scope>
    <source>
        <tissue>Brain</tissue>
    </source>
</reference>
<reference key="4">
    <citation type="journal article" date="2007" name="BMC Genomics">
        <title>The full-ORF clone resource of the German cDNA consortium.</title>
        <authorList>
            <person name="Bechtel S."/>
            <person name="Rosenfelder H."/>
            <person name="Duda A."/>
            <person name="Schmidt C.P."/>
            <person name="Ernst U."/>
            <person name="Wellenreuther R."/>
            <person name="Mehrle A."/>
            <person name="Schuster C."/>
            <person name="Bahr A."/>
            <person name="Bloecker H."/>
            <person name="Heubner D."/>
            <person name="Hoerlein A."/>
            <person name="Michel G."/>
            <person name="Wedler H."/>
            <person name="Koehrer K."/>
            <person name="Ottenwaelder B."/>
            <person name="Poustka A."/>
            <person name="Wiemann S."/>
            <person name="Schupp I."/>
        </authorList>
    </citation>
    <scope>NUCLEOTIDE SEQUENCE [LARGE SCALE MRNA] OF 368-1036</scope>
    <source>
        <tissue>Liver</tissue>
    </source>
</reference>
<reference key="5">
    <citation type="journal article" date="2001" name="Genome Res.">
        <title>Towards a catalog of human genes and proteins: sequencing and analysis of 500 novel complete protein coding human cDNAs.</title>
        <authorList>
            <person name="Wiemann S."/>
            <person name="Weil B."/>
            <person name="Wellenreuther R."/>
            <person name="Gassenhuber J."/>
            <person name="Glassl S."/>
            <person name="Ansorge W."/>
            <person name="Boecher M."/>
            <person name="Bloecker H."/>
            <person name="Bauersachs S."/>
            <person name="Blum H."/>
            <person name="Lauber J."/>
            <person name="Duesterhoeft A."/>
            <person name="Beyer A."/>
            <person name="Koehrer K."/>
            <person name="Strack N."/>
            <person name="Mewes H.-W."/>
            <person name="Ottenwaelder B."/>
            <person name="Obermaier B."/>
            <person name="Tampe J."/>
            <person name="Heubner D."/>
            <person name="Wambutt R."/>
            <person name="Korn B."/>
            <person name="Klein M."/>
            <person name="Poustka A."/>
        </authorList>
    </citation>
    <scope>NUCLEOTIDE SEQUENCE [LARGE SCALE MRNA] OF 884-1036</scope>
</reference>
<reference key="6">
    <citation type="journal article" date="2004" name="Int. J. Mol. Med.">
        <title>Identification and characterization of PDZRN3 and PDZRN4 genes in silico.</title>
        <authorList>
            <person name="Katoh M."/>
            <person name="Katoh M."/>
        </authorList>
    </citation>
    <scope>IDENTIFICATION</scope>
    <scope>ALTERNATIVE SPLICING (ISOFORMS 1 AND 2)</scope>
</reference>
<reference key="7">
    <citation type="journal article" date="2006" name="Science">
        <title>The consensus coding sequences of human breast and colorectal cancers.</title>
        <authorList>
            <person name="Sjoeblom T."/>
            <person name="Jones S."/>
            <person name="Wood L.D."/>
            <person name="Parsons D.W."/>
            <person name="Lin J."/>
            <person name="Barber T.D."/>
            <person name="Mandelker D."/>
            <person name="Leary R.J."/>
            <person name="Ptak J."/>
            <person name="Silliman N."/>
            <person name="Szabo S."/>
            <person name="Buckhaults P."/>
            <person name="Farrell C."/>
            <person name="Meeh P."/>
            <person name="Markowitz S.D."/>
            <person name="Willis J."/>
            <person name="Dawson D."/>
            <person name="Willson J.K.V."/>
            <person name="Gazdar A.F."/>
            <person name="Hartigan J."/>
            <person name="Wu L."/>
            <person name="Liu C."/>
            <person name="Parmigiani G."/>
            <person name="Park B.H."/>
            <person name="Bachman K.E."/>
            <person name="Papadopoulos N."/>
            <person name="Vogelstein B."/>
            <person name="Kinzler K.W."/>
            <person name="Velculescu V.E."/>
        </authorList>
    </citation>
    <scope>VARIANT [LARGE SCALE ANALYSIS] ARG-784</scope>
</reference>
<accession>Q6ZMN7</accession>
<accession>Q52LY3</accession>
<accession>Q52LY4</accession>
<accession>Q6N052</accession>
<accession>Q8IUU1</accession>
<accession>Q9NTP7</accession>
<feature type="chain" id="PRO_0000055920" description="PDZ domain-containing RING finger protein 4">
    <location>
        <begin position="1"/>
        <end position="1036"/>
    </location>
</feature>
<feature type="domain" description="PDZ 1" evidence="2">
    <location>
        <begin position="224"/>
        <end position="314"/>
    </location>
</feature>
<feature type="domain" description="PDZ 2" evidence="2">
    <location>
        <begin position="402"/>
        <end position="486"/>
    </location>
</feature>
<feature type="zinc finger region" description="RING-type; degenerate" evidence="3">
    <location>
        <begin position="18"/>
        <end position="56"/>
    </location>
</feature>
<feature type="region of interest" description="Disordered" evidence="4">
    <location>
        <begin position="129"/>
        <end position="161"/>
    </location>
</feature>
<feature type="region of interest" description="Disordered" evidence="4">
    <location>
        <begin position="515"/>
        <end position="590"/>
    </location>
</feature>
<feature type="region of interest" description="Disordered" evidence="4">
    <location>
        <begin position="726"/>
        <end position="819"/>
    </location>
</feature>
<feature type="coiled-coil region" evidence="1">
    <location>
        <begin position="655"/>
        <end position="689"/>
    </location>
</feature>
<feature type="compositionally biased region" description="Gly residues" evidence="4">
    <location>
        <begin position="129"/>
        <end position="160"/>
    </location>
</feature>
<feature type="compositionally biased region" description="Basic and acidic residues" evidence="4">
    <location>
        <begin position="548"/>
        <end position="566"/>
    </location>
</feature>
<feature type="compositionally biased region" description="Basic and acidic residues" evidence="4">
    <location>
        <begin position="726"/>
        <end position="735"/>
    </location>
</feature>
<feature type="compositionally biased region" description="Polar residues" evidence="4">
    <location>
        <begin position="736"/>
        <end position="750"/>
    </location>
</feature>
<feature type="compositionally biased region" description="Low complexity" evidence="4">
    <location>
        <begin position="774"/>
        <end position="799"/>
    </location>
</feature>
<feature type="compositionally biased region" description="Basic and acidic residues" evidence="4">
    <location>
        <begin position="805"/>
        <end position="819"/>
    </location>
</feature>
<feature type="splice variant" id="VSP_012614" description="In isoform 4." evidence="6">
    <location>
        <begin position="1"/>
        <end position="260"/>
    </location>
</feature>
<feature type="splice variant" id="VSP_012611" description="In isoform 2." evidence="7">
    <location>
        <begin position="1"/>
        <end position="258"/>
    </location>
</feature>
<feature type="splice variant" id="VSP_012612" description="In isoform 2." evidence="7">
    <original>SKILENGPADRADGLEIHDKIME</original>
    <variation>MGCNLCTFQKREEHYKLLYEVSQ</variation>
    <location>
        <begin position="259"/>
        <end position="281"/>
    </location>
</feature>
<feature type="splice variant" id="VSP_012615" description="In isoform 4." evidence="6">
    <original>ILENGPADRADGLEIHDKIME</original>
    <variation>MSGKRQFFLKPLALLTCWPST</variation>
    <location>
        <begin position="261"/>
        <end position="281"/>
    </location>
</feature>
<feature type="sequence variant" id="VAR_020966" description="In dbSNP:rs285584.">
    <original>G</original>
    <variation>S</variation>
    <location>
        <position position="429"/>
    </location>
</feature>
<feature type="sequence variant" id="VAR_035951" description="In a colorectal cancer sample; somatic mutation." evidence="5">
    <original>G</original>
    <variation>R</variation>
    <location>
        <position position="784"/>
    </location>
</feature>
<feature type="sequence conflict" description="In Ref. 1 and 2; BAD18688." evidence="8" ref="1 2">
    <original>S</original>
    <variation>G</variation>
    <location>
        <position position="650"/>
    </location>
</feature>
<comment type="interaction">
    <interactant intactId="EBI-25984441">
        <id>Q6ZMN7-2</id>
    </interactant>
    <interactant intactId="EBI-372899">
        <id>Q13148</id>
        <label>TARDBP</label>
    </interactant>
    <organismsDiffer>false</organismsDiffer>
    <experiments>3</experiments>
</comment>
<comment type="alternative products">
    <event type="alternative splicing"/>
    <isoform>
        <id>Q6ZMN7-1</id>
        <name>1</name>
        <sequence type="displayed"/>
    </isoform>
    <isoform>
        <id>Q6ZMN7-2</id>
        <name>2</name>
        <name>PDZRN4S</name>
        <sequence type="described" ref="VSP_012611 VSP_012612"/>
    </isoform>
    <isoform>
        <id>Q6ZMN7-4</id>
        <name>4</name>
        <sequence type="described" ref="VSP_012614 VSP_012615"/>
    </isoform>
</comment>
<evidence type="ECO:0000255" key="1"/>
<evidence type="ECO:0000255" key="2">
    <source>
        <dbReference type="PROSITE-ProRule" id="PRU00143"/>
    </source>
</evidence>
<evidence type="ECO:0000255" key="3">
    <source>
        <dbReference type="PROSITE-ProRule" id="PRU00175"/>
    </source>
</evidence>
<evidence type="ECO:0000256" key="4">
    <source>
        <dbReference type="SAM" id="MobiDB-lite"/>
    </source>
</evidence>
<evidence type="ECO:0000269" key="5">
    <source>
    </source>
</evidence>
<evidence type="ECO:0000303" key="6">
    <source>
    </source>
</evidence>
<evidence type="ECO:0000303" key="7">
    <source>
    </source>
</evidence>
<evidence type="ECO:0000305" key="8"/>
<gene>
    <name type="primary">PDZRN4</name>
    <name type="synonym">LNX4</name>
    <name type="synonym">SEMCAP3L</name>
</gene>